<name>GLYC_PIRVV</name>
<keyword id="KW-1015">Disulfide bond</keyword>
<keyword id="KW-1170">Fusion of virus membrane with host endosomal membrane</keyword>
<keyword id="KW-1168">Fusion of virus membrane with host membrane</keyword>
<keyword id="KW-0325">Glycoprotein</keyword>
<keyword id="KW-1032">Host cell membrane</keyword>
<keyword id="KW-1038">Host endoplasmic reticulum</keyword>
<keyword id="KW-1040">Host Golgi apparatus</keyword>
<keyword id="KW-1043">Host membrane</keyword>
<keyword id="KW-0945">Host-virus interaction</keyword>
<keyword id="KW-0449">Lipoprotein</keyword>
<keyword id="KW-0472">Membrane</keyword>
<keyword id="KW-0479">Metal-binding</keyword>
<keyword id="KW-0519">Myristate</keyword>
<keyword id="KW-1185">Reference proteome</keyword>
<keyword id="KW-0812">Transmembrane</keyword>
<keyword id="KW-1133">Transmembrane helix</keyword>
<keyword id="KW-1161">Viral attachment to host cell</keyword>
<keyword id="KW-0261">Viral envelope protein</keyword>
<keyword id="KW-1162">Viral penetration into host cytoplasm</keyword>
<keyword id="KW-0946">Virion</keyword>
<keyword id="KW-1164">Virus endocytosis by host</keyword>
<keyword id="KW-1160">Virus entry into host cell</keyword>
<keyword id="KW-0862">Zinc</keyword>
<organism>
    <name type="scientific">Pirital mammarenavirus (isolate Rat/Venezuela/VAV-488/1995)</name>
    <name type="common">PIRV</name>
    <dbReference type="NCBI Taxonomy" id="3052324"/>
    <lineage>
        <taxon>Viruses</taxon>
        <taxon>Riboviria</taxon>
        <taxon>Orthornavirae</taxon>
        <taxon>Negarnaviricota</taxon>
        <taxon>Polyploviricotina</taxon>
        <taxon>Ellioviricetes</taxon>
        <taxon>Bunyavirales</taxon>
        <taxon>Arenaviridae</taxon>
        <taxon>Mammarenavirus</taxon>
    </lineage>
</organism>
<reference key="1">
    <citation type="journal article" date="2002" name="Virology">
        <title>High genetic divergence and recombination in Arenaviruses from the Americas.</title>
        <authorList>
            <person name="Archer A.M."/>
            <person name="Rico-Hesse R."/>
        </authorList>
    </citation>
    <scope>NUCLEOTIDE SEQUENCE [GENOMIC RNA]</scope>
</reference>
<evidence type="ECO:0000250" key="1">
    <source>
        <dbReference type="UniProtKB" id="P26313"/>
    </source>
</evidence>
<evidence type="ECO:0000255" key="2">
    <source>
        <dbReference type="HAMAP-Rule" id="MF_04084"/>
    </source>
</evidence>
<gene>
    <name evidence="2" type="primary">GPC</name>
    <name type="synonym">GP-C</name>
</gene>
<protein>
    <recommendedName>
        <fullName evidence="2">Pre-glycoprotein polyprotein GP complex</fullName>
        <shortName evidence="2">Pre-GP-C</shortName>
    </recommendedName>
    <component>
        <recommendedName>
            <fullName evidence="2">Stable signal peptide</fullName>
            <shortName evidence="2">SSP</shortName>
        </recommendedName>
    </component>
    <component>
        <recommendedName>
            <fullName evidence="2">Glycoprotein G1</fullName>
            <shortName evidence="2">GP1</shortName>
        </recommendedName>
    </component>
    <component>
        <recommendedName>
            <fullName evidence="2">Glycoprotein G2</fullName>
            <shortName evidence="2">GP2</shortName>
        </recommendedName>
    </component>
</protein>
<dbReference type="EMBL" id="AF485262">
    <property type="protein sequence ID" value="AAN09946.1"/>
    <property type="molecule type" value="Genomic_RNA"/>
</dbReference>
<dbReference type="RefSeq" id="YP_025080.1">
    <property type="nucleotide sequence ID" value="NC_005894.1"/>
</dbReference>
<dbReference type="SMR" id="Q8B119"/>
<dbReference type="GlyCosmos" id="Q8B119">
    <property type="glycosylation" value="14 sites, No reported glycans"/>
</dbReference>
<dbReference type="GeneID" id="2845916"/>
<dbReference type="KEGG" id="vg:2845916"/>
<dbReference type="OrthoDB" id="4838at10239"/>
<dbReference type="Proteomes" id="UP000009266">
    <property type="component" value="Genome"/>
</dbReference>
<dbReference type="GO" id="GO:0044167">
    <property type="term" value="C:host cell endoplasmic reticulum membrane"/>
    <property type="evidence" value="ECO:0007669"/>
    <property type="project" value="UniProtKB-SubCell"/>
</dbReference>
<dbReference type="GO" id="GO:0044178">
    <property type="term" value="C:host cell Golgi membrane"/>
    <property type="evidence" value="ECO:0007669"/>
    <property type="project" value="UniProtKB-SubCell"/>
</dbReference>
<dbReference type="GO" id="GO:0020002">
    <property type="term" value="C:host cell plasma membrane"/>
    <property type="evidence" value="ECO:0007669"/>
    <property type="project" value="UniProtKB-SubCell"/>
</dbReference>
<dbReference type="GO" id="GO:0016020">
    <property type="term" value="C:membrane"/>
    <property type="evidence" value="ECO:0007669"/>
    <property type="project" value="UniProtKB-UniRule"/>
</dbReference>
<dbReference type="GO" id="GO:0019031">
    <property type="term" value="C:viral envelope"/>
    <property type="evidence" value="ECO:0007669"/>
    <property type="project" value="UniProtKB-UniRule"/>
</dbReference>
<dbReference type="GO" id="GO:0055036">
    <property type="term" value="C:virion membrane"/>
    <property type="evidence" value="ECO:0007669"/>
    <property type="project" value="UniProtKB-SubCell"/>
</dbReference>
<dbReference type="GO" id="GO:0046872">
    <property type="term" value="F:metal ion binding"/>
    <property type="evidence" value="ECO:0007669"/>
    <property type="project" value="UniProtKB-KW"/>
</dbReference>
<dbReference type="GO" id="GO:0039654">
    <property type="term" value="P:fusion of virus membrane with host endosome membrane"/>
    <property type="evidence" value="ECO:0007669"/>
    <property type="project" value="UniProtKB-UniRule"/>
</dbReference>
<dbReference type="GO" id="GO:0019065">
    <property type="term" value="P:receptor-mediated endocytosis of virus by host cell"/>
    <property type="evidence" value="ECO:0007669"/>
    <property type="project" value="UniProtKB-UniRule"/>
</dbReference>
<dbReference type="GO" id="GO:0019062">
    <property type="term" value="P:virion attachment to host cell"/>
    <property type="evidence" value="ECO:0007669"/>
    <property type="project" value="UniProtKB-UniRule"/>
</dbReference>
<dbReference type="Gene3D" id="6.10.140.1590">
    <property type="match status" value="1"/>
</dbReference>
<dbReference type="Gene3D" id="2.20.28.180">
    <property type="entry name" value="Arenavirus glycoprotein, zinc binding domain"/>
    <property type="match status" value="1"/>
</dbReference>
<dbReference type="HAMAP" id="MF_04084">
    <property type="entry name" value="ARENA_GPC"/>
    <property type="match status" value="1"/>
</dbReference>
<dbReference type="InterPro" id="IPR001535">
    <property type="entry name" value="Arena_glycoprot"/>
</dbReference>
<dbReference type="InterPro" id="IPR043015">
    <property type="entry name" value="Arena_glycoprot_zinc-bd"/>
</dbReference>
<dbReference type="Pfam" id="PF00798">
    <property type="entry name" value="Arena_glycoprot"/>
    <property type="match status" value="1"/>
</dbReference>
<dbReference type="PIRSF" id="PIRSF004028">
    <property type="entry name" value="GPC_ArenaV"/>
    <property type="match status" value="1"/>
</dbReference>
<accession>Q8B119</accession>
<sequence>MGQFITLMQSIPEALNMAFNVALVIVSLLCVTKGLINLWKCGIIQLLMFLALAGRSCDGEYKIDRRHVLSHVEFNLTRMFDNLPQSCSINNTHHYYKGPENTTWGVELTLTNTSVMNRSDENVTSIRSLGFGNITNCDKTGEAGHTLKWLLNELHFTVLHVTRHIGALCRTTAGAGLLIQYNLTTSDKGGEVGRHLIASLAQIIGDNKAAWVGKCYNNCTSSGKCSLTNCEGGTHYKFLVIQNTTWPNHCSYSPMSTVRMIIQKTAYSSVSRKLLGFFTWDISDSSGQHVPGGYCLEQWAIVWAGIKCFDNSVMAKCNKDHNEEFCDTMRLFDFNQNAIKTLQLNVENSLNLMKKSINGLISDSLVIRNSLKQLAKIPYCNYTKFWYVNDTITGKHSLPQCWLVSNGSYLNETHFKNEWLWESQKLYNDMLLKEYEERQGNTPLALADLCFWSLVFFTTTVFFQLIGIPTHRHLIGEGCPKPHRLTSNSLCSCGFYKIPKKPFRWVRKGK</sequence>
<proteinExistence type="inferred from homology"/>
<organismHost>
    <name type="scientific">Sigmodon alstoni</name>
    <dbReference type="NCBI Taxonomy" id="134742"/>
</organismHost>
<feature type="initiator methionine" description="Removed; by host" evidence="2">
    <location>
        <position position="1"/>
    </location>
</feature>
<feature type="chain" id="PRO_0000361616" description="Pre-glycoprotein polyprotein GP complex" evidence="2">
    <location>
        <begin position="2"/>
        <end position="510"/>
    </location>
</feature>
<feature type="chain" id="PRO_0000361617" description="Stable signal peptide" evidence="2">
    <location>
        <begin position="2"/>
        <end position="58"/>
    </location>
</feature>
<feature type="chain" id="PRO_0000361618" description="Glycoprotein G1" evidence="2">
    <location>
        <begin position="59"/>
        <end position="275"/>
    </location>
</feature>
<feature type="chain" id="PRO_0000361619" description="Glycoprotein G2" evidence="2">
    <location>
        <begin position="276"/>
        <end position="510"/>
    </location>
</feature>
<feature type="topological domain" description="Extracellular" evidence="2">
    <location>
        <begin position="2"/>
        <end position="17"/>
    </location>
</feature>
<feature type="transmembrane region" description="Helical" evidence="2">
    <location>
        <begin position="18"/>
        <end position="32"/>
    </location>
</feature>
<feature type="topological domain" description="Cytoplasmic" evidence="2">
    <location>
        <position position="33"/>
    </location>
</feature>
<feature type="transmembrane region" description="Helical" evidence="2">
    <location>
        <begin position="34"/>
        <end position="53"/>
    </location>
</feature>
<feature type="topological domain" description="Extracellular" evidence="2">
    <location>
        <begin position="54"/>
        <end position="58"/>
    </location>
</feature>
<feature type="topological domain" description="Extracellular" evidence="2">
    <location>
        <begin position="59"/>
        <end position="448"/>
    </location>
</feature>
<feature type="transmembrane region" description="Helical" evidence="2">
    <location>
        <begin position="449"/>
        <end position="469"/>
    </location>
</feature>
<feature type="topological domain" description="Cytoplasmic" evidence="2">
    <location>
        <begin position="470"/>
        <end position="510"/>
    </location>
</feature>
<feature type="binding site" evidence="2">
    <location>
        <position position="57"/>
    </location>
    <ligand>
        <name>Zn(2+)</name>
        <dbReference type="ChEBI" id="CHEBI:29105"/>
        <label>1</label>
    </ligand>
</feature>
<feature type="binding site" evidence="2">
    <location>
        <position position="471"/>
    </location>
    <ligand>
        <name>Zn(2+)</name>
        <dbReference type="ChEBI" id="CHEBI:29105"/>
        <label>2</label>
    </ligand>
</feature>
<feature type="binding site" evidence="2">
    <location>
        <position position="473"/>
    </location>
    <ligand>
        <name>Zn(2+)</name>
        <dbReference type="ChEBI" id="CHEBI:29105"/>
        <label>2</label>
    </ligand>
</feature>
<feature type="binding site" evidence="2">
    <location>
        <position position="479"/>
    </location>
    <ligand>
        <name>Zn(2+)</name>
        <dbReference type="ChEBI" id="CHEBI:29105"/>
        <label>2</label>
    </ligand>
</feature>
<feature type="binding site" evidence="2">
    <location>
        <position position="483"/>
    </location>
    <ligand>
        <name>Zn(2+)</name>
        <dbReference type="ChEBI" id="CHEBI:29105"/>
        <label>1</label>
    </ligand>
</feature>
<feature type="binding site" evidence="2">
    <location>
        <position position="491"/>
    </location>
    <ligand>
        <name>Zn(2+)</name>
        <dbReference type="ChEBI" id="CHEBI:29105"/>
        <label>1</label>
    </ligand>
</feature>
<feature type="binding site" evidence="2">
    <location>
        <position position="493"/>
    </location>
    <ligand>
        <name>Zn(2+)</name>
        <dbReference type="ChEBI" id="CHEBI:29105"/>
        <label>1</label>
    </ligand>
</feature>
<feature type="site" description="Important for GP-C-mediated membrane fusion" evidence="1">
    <location>
        <position position="33"/>
    </location>
</feature>
<feature type="site" description="Cleavage; by host signal peptidase" evidence="2">
    <location>
        <begin position="58"/>
        <end position="59"/>
    </location>
</feature>
<feature type="site" description="Cleavage; by host MBTPS1" evidence="2">
    <location>
        <begin position="275"/>
        <end position="276"/>
    </location>
</feature>
<feature type="lipid moiety-binding region" description="N-myristoyl glycine; by host" evidence="2">
    <location>
        <position position="2"/>
    </location>
</feature>
<feature type="glycosylation site" description="N-linked (GlcNAc...) asparagine; by host" evidence="2">
    <location>
        <position position="75"/>
    </location>
</feature>
<feature type="glycosylation site" description="N-linked (GlcNAc...) asparagine; by host" evidence="2">
    <location>
        <position position="90"/>
    </location>
</feature>
<feature type="glycosylation site" description="N-linked (GlcNAc...) asparagine; by host" evidence="2">
    <location>
        <position position="101"/>
    </location>
</feature>
<feature type="glycosylation site" description="N-linked (GlcNAc...) asparagine; by host" evidence="2">
    <location>
        <position position="112"/>
    </location>
</feature>
<feature type="glycosylation site" description="N-linked (GlcNAc...) asparagine; by host" evidence="2">
    <location>
        <position position="117"/>
    </location>
</feature>
<feature type="glycosylation site" description="N-linked (GlcNAc...) asparagine; by host" evidence="2">
    <location>
        <position position="122"/>
    </location>
</feature>
<feature type="glycosylation site" description="N-linked (GlcNAc...) asparagine; by host" evidence="2">
    <location>
        <position position="133"/>
    </location>
</feature>
<feature type="glycosylation site" description="N-linked (GlcNAc...) asparagine; by host" evidence="2">
    <location>
        <position position="182"/>
    </location>
</feature>
<feature type="glycosylation site" description="N-linked (GlcNAc...) asparagine; by host" evidence="2">
    <location>
        <position position="218"/>
    </location>
</feature>
<feature type="glycosylation site" description="N-linked (GlcNAc...) asparagine; by host" evidence="2">
    <location>
        <position position="243"/>
    </location>
</feature>
<feature type="glycosylation site" description="N-linked (GlcNAc...) asparagine; by host" evidence="2">
    <location>
        <position position="381"/>
    </location>
</feature>
<feature type="glycosylation site" description="N-linked (GlcNAc...) asparagine; by host" evidence="2">
    <location>
        <position position="389"/>
    </location>
</feature>
<feature type="glycosylation site" description="N-linked (GlcNAc...) asparagine; by host" evidence="2">
    <location>
        <position position="406"/>
    </location>
</feature>
<feature type="glycosylation site" description="N-linked (GlcNAc...) asparagine; by host" evidence="2">
    <location>
        <position position="411"/>
    </location>
</feature>
<feature type="disulfide bond" evidence="2">
    <location>
        <begin position="87"/>
        <end position="250"/>
    </location>
</feature>
<feature type="disulfide bond" evidence="2">
    <location>
        <begin position="295"/>
        <end position="308"/>
    </location>
</feature>
<feature type="disulfide bond" evidence="2">
    <location>
        <begin position="317"/>
        <end position="326"/>
    </location>
</feature>
<feature type="disulfide bond" evidence="2">
    <location>
        <begin position="380"/>
        <end position="401"/>
    </location>
</feature>
<comment type="function">
    <molecule>Glycoprotein G2</molecule>
    <text evidence="2">Class I viral fusion protein that directs fusion of viral and host endosomal membranes, leading to delivery of the nucleocapsid into the cytoplasm. Membrane fusion is mediated by irreversible conformational changes induced upon acidification in the endosome.</text>
</comment>
<comment type="function">
    <text evidence="2">Stable signal peptide (SSP): cleaved and functions as a signal peptide. In addition, it is also retained as the third component of the GP complex. The SSP is required for efficient glycoprotein expression, post-translational maturation cleavage of GP1 and GP2, glycoprotein transport to the cell surface plasma membrane, formation of infectious virus particles, and acid pH-dependent glycoprotein-mediated cell fusion.</text>
</comment>
<comment type="function">
    <molecule>Glycoprotein G1</molecule>
    <text evidence="2">Interacts with the host receptor.</text>
</comment>
<comment type="subunit">
    <molecule>Glycoprotein G1</molecule>
    <text evidence="2">Homotetramer; disulfide-linked.</text>
</comment>
<comment type="subunit">
    <molecule>Glycoprotein G2</molecule>
    <text evidence="2">Homotetramer. GP2 homotetramers bind through ionic interactions with GP1 homotetramers to form the GP complex together with the stable signal peptide. The GP-C polyprotein interacts with the host protease MBTPS1/SKI-1 resulting in the polyprotein processing.</text>
</comment>
<comment type="subcellular location">
    <molecule>Glycoprotein G1</molecule>
    <subcellularLocation>
        <location evidence="2">Virion membrane</location>
        <topology evidence="2">Peripheral membrane protein</topology>
    </subcellularLocation>
    <subcellularLocation>
        <location evidence="2">Host endoplasmic reticulum membrane</location>
        <topology evidence="2">Peripheral membrane protein</topology>
    </subcellularLocation>
    <subcellularLocation>
        <location evidence="2">Host Golgi apparatus membrane</location>
        <topology evidence="2">Peripheral membrane protein</topology>
    </subcellularLocation>
    <subcellularLocation>
        <location evidence="2">Host cell membrane</location>
        <topology evidence="2">Peripheral membrane protein</topology>
    </subcellularLocation>
</comment>
<comment type="subcellular location">
    <molecule>Glycoprotein G2</molecule>
    <subcellularLocation>
        <location evidence="2">Virion membrane</location>
        <topology evidence="2">Single-pass membrane protein</topology>
    </subcellularLocation>
    <subcellularLocation>
        <location evidence="2">Host endoplasmic reticulum membrane</location>
        <topology evidence="2">Single-pass membrane protein</topology>
    </subcellularLocation>
    <subcellularLocation>
        <location evidence="2">Host Golgi apparatus membrane</location>
        <topology evidence="2">Single-pass membrane protein</topology>
    </subcellularLocation>
    <subcellularLocation>
        <location evidence="2">Host cell membrane</location>
        <topology evidence="2">Single-pass membrane protein</topology>
    </subcellularLocation>
    <text evidence="2">Binding to the stable signal peptide masks endogenous ER localization signals in the cytoplasmic domain of G2 to ensure that only the fully assembled, tripartite GP complex is transported for virion assembly.</text>
</comment>
<comment type="subcellular location">
    <molecule>Stable signal peptide</molecule>
    <subcellularLocation>
        <location evidence="2">Virion membrane</location>
        <topology evidence="2">Multi-pass membrane protein</topology>
    </subcellularLocation>
    <subcellularLocation>
        <location evidence="2">Host endoplasmic reticulum membrane</location>
        <topology evidence="2">Multi-pass membrane protein</topology>
    </subcellularLocation>
    <subcellularLocation>
        <location evidence="2">Host Golgi apparatus membrane</location>
        <topology evidence="2">Multi-pass membrane protein</topology>
    </subcellularLocation>
    <subcellularLocation>
        <location evidence="2">Host cell membrane</location>
        <topology evidence="2">Multi-pass membrane protein</topology>
    </subcellularLocation>
</comment>
<comment type="domain">
    <text evidence="2">The cytoplasmic domain of GP2 plays a role in ER location. It also contains a zinc-binding domain that allows SSP retention in the GPC complex by accepting a cysteine from SSP as the fourth ligand.</text>
</comment>
<comment type="PTM">
    <molecule>Pre-glycoprotein polyprotein GP complex</molecule>
    <text evidence="2">Specific enzymatic cleavages in vivo yield mature proteins. GP-C polyprotein is cleaved in the endoplasmic reticulum by the host protease MBTPS1. Only cleaved glycoprotein is incorporated into virions.</text>
</comment>
<comment type="PTM">
    <molecule>Stable signal peptide</molecule>
    <text evidence="2">The SSP remains stably associated with the GP complex following cleavage by signal peptidase and plays crucial roles in the trafficking of GP through the secretory pathway.</text>
</comment>
<comment type="PTM">
    <molecule>Stable signal peptide</molecule>
    <text evidence="2">Myristoylation is necessary for GP2-mediated fusion activity.</text>
</comment>
<comment type="similarity">
    <text evidence="2">Belongs to the arenaviridae GPC protein family.</text>
</comment>